<protein>
    <recommendedName>
        <fullName evidence="1">Putative manganese efflux pump MntP</fullName>
    </recommendedName>
</protein>
<comment type="function">
    <text evidence="1">Probably functions as a manganese efflux pump.</text>
</comment>
<comment type="subcellular location">
    <subcellularLocation>
        <location evidence="1">Cell inner membrane</location>
        <topology evidence="1">Multi-pass membrane protein</topology>
    </subcellularLocation>
</comment>
<comment type="similarity">
    <text evidence="1">Belongs to the MntP (TC 9.B.29) family.</text>
</comment>
<feature type="chain" id="PRO_0000315561" description="Putative manganese efflux pump MntP">
    <location>
        <begin position="1"/>
        <end position="184"/>
    </location>
</feature>
<feature type="transmembrane region" description="Helical" evidence="1">
    <location>
        <begin position="39"/>
        <end position="59"/>
    </location>
</feature>
<feature type="transmembrane region" description="Helical" evidence="1">
    <location>
        <begin position="65"/>
        <end position="85"/>
    </location>
</feature>
<feature type="transmembrane region" description="Helical" evidence="1">
    <location>
        <begin position="102"/>
        <end position="122"/>
    </location>
</feature>
<feature type="transmembrane region" description="Helical" evidence="1">
    <location>
        <begin position="132"/>
        <end position="152"/>
    </location>
</feature>
<feature type="transmembrane region" description="Helical" evidence="1">
    <location>
        <begin position="161"/>
        <end position="181"/>
    </location>
</feature>
<dbReference type="EMBL" id="CP000767">
    <property type="protein sequence ID" value="EAT99508.1"/>
    <property type="molecule type" value="Genomic_DNA"/>
</dbReference>
<dbReference type="RefSeq" id="WP_011991688.1">
    <property type="nucleotide sequence ID" value="NC_009715.2"/>
</dbReference>
<dbReference type="STRING" id="360105.CCV52592_0090"/>
<dbReference type="KEGG" id="ccv:CCV52592_0090"/>
<dbReference type="HOGENOM" id="CLU_096410_3_0_7"/>
<dbReference type="OrthoDB" id="9811590at2"/>
<dbReference type="Proteomes" id="UP000006380">
    <property type="component" value="Chromosome"/>
</dbReference>
<dbReference type="GO" id="GO:0005886">
    <property type="term" value="C:plasma membrane"/>
    <property type="evidence" value="ECO:0007669"/>
    <property type="project" value="UniProtKB-SubCell"/>
</dbReference>
<dbReference type="GO" id="GO:0005384">
    <property type="term" value="F:manganese ion transmembrane transporter activity"/>
    <property type="evidence" value="ECO:0007669"/>
    <property type="project" value="UniProtKB-UniRule"/>
</dbReference>
<dbReference type="HAMAP" id="MF_01521">
    <property type="entry name" value="MntP_pump"/>
    <property type="match status" value="1"/>
</dbReference>
<dbReference type="InterPro" id="IPR003810">
    <property type="entry name" value="Mntp/YtaF"/>
</dbReference>
<dbReference type="InterPro" id="IPR022929">
    <property type="entry name" value="Put_MntP"/>
</dbReference>
<dbReference type="PANTHER" id="PTHR35529">
    <property type="entry name" value="MANGANESE EFFLUX PUMP MNTP-RELATED"/>
    <property type="match status" value="1"/>
</dbReference>
<dbReference type="PANTHER" id="PTHR35529:SF1">
    <property type="entry name" value="MANGANESE EFFLUX PUMP MNTP-RELATED"/>
    <property type="match status" value="1"/>
</dbReference>
<dbReference type="Pfam" id="PF02659">
    <property type="entry name" value="Mntp"/>
    <property type="match status" value="1"/>
</dbReference>
<keyword id="KW-0997">Cell inner membrane</keyword>
<keyword id="KW-1003">Cell membrane</keyword>
<keyword id="KW-0406">Ion transport</keyword>
<keyword id="KW-0464">Manganese</keyword>
<keyword id="KW-0472">Membrane</keyword>
<keyword id="KW-1185">Reference proteome</keyword>
<keyword id="KW-0812">Transmembrane</keyword>
<keyword id="KW-1133">Transmembrane helix</keyword>
<keyword id="KW-0813">Transport</keyword>
<sequence>MEILLLAFALAMDSVALSIASGAKCRTLSFLQVLKTALIFGVFQALMPFLGYILGLSFVNFIQEIDHFIAFGILGFLGAKMILEAHHTKDEPCLINLSSKDLALGAVATSIDALAVGITFSFANVDVTYSCLIIGTVCFVLCTAACYVGKILGAWLEAKALVLGGLILIGLGTKILITHLVDHI</sequence>
<accession>A7GW20</accession>
<gene>
    <name evidence="1" type="primary">mntP</name>
    <name type="ordered locus">Ccur92_01080</name>
    <name type="ORF">CCV52592_0090</name>
</gene>
<name>MNTP_CAMC5</name>
<organism>
    <name type="scientific">Campylobacter curvus (strain 525.92)</name>
    <dbReference type="NCBI Taxonomy" id="360105"/>
    <lineage>
        <taxon>Bacteria</taxon>
        <taxon>Pseudomonadati</taxon>
        <taxon>Campylobacterota</taxon>
        <taxon>Epsilonproteobacteria</taxon>
        <taxon>Campylobacterales</taxon>
        <taxon>Campylobacteraceae</taxon>
        <taxon>Campylobacter</taxon>
    </lineage>
</organism>
<proteinExistence type="inferred from homology"/>
<evidence type="ECO:0000255" key="1">
    <source>
        <dbReference type="HAMAP-Rule" id="MF_01521"/>
    </source>
</evidence>
<reference key="1">
    <citation type="submission" date="2007-07" db="EMBL/GenBank/DDBJ databases">
        <title>Genome sequence of Campylobacter curvus 525.92 isolated from human feces.</title>
        <authorList>
            <person name="Fouts D.E."/>
            <person name="Mongodin E.F."/>
            <person name="Puiu D."/>
            <person name="Sebastian Y."/>
            <person name="Miller W.G."/>
            <person name="Mandrell R.E."/>
            <person name="Lastovica A.J."/>
            <person name="Nelson K.E."/>
        </authorList>
    </citation>
    <scope>NUCLEOTIDE SEQUENCE [LARGE SCALE GENOMIC DNA]</scope>
    <source>
        <strain>525.92</strain>
    </source>
</reference>